<keyword id="KW-0687">Ribonucleoprotein</keyword>
<keyword id="KW-0689">Ribosomal protein</keyword>
<evidence type="ECO:0000255" key="1">
    <source>
        <dbReference type="HAMAP-Rule" id="MF_00374"/>
    </source>
</evidence>
<evidence type="ECO:0000305" key="2"/>
<dbReference type="EMBL" id="CP000526">
    <property type="protein sequence ID" value="ABM51770.1"/>
    <property type="molecule type" value="Genomic_DNA"/>
</dbReference>
<dbReference type="RefSeq" id="WP_004199856.1">
    <property type="nucleotide sequence ID" value="NC_008785.1"/>
</dbReference>
<dbReference type="SMR" id="A1V895"/>
<dbReference type="GeneID" id="93061824"/>
<dbReference type="KEGG" id="bmv:BMASAVP1_A3161"/>
<dbReference type="HOGENOM" id="CLU_158491_1_1_4"/>
<dbReference type="GO" id="GO:0022625">
    <property type="term" value="C:cytosolic large ribosomal subunit"/>
    <property type="evidence" value="ECO:0007669"/>
    <property type="project" value="TreeGrafter"/>
</dbReference>
<dbReference type="GO" id="GO:0003735">
    <property type="term" value="F:structural constituent of ribosome"/>
    <property type="evidence" value="ECO:0007669"/>
    <property type="project" value="InterPro"/>
</dbReference>
<dbReference type="GO" id="GO:0006412">
    <property type="term" value="P:translation"/>
    <property type="evidence" value="ECO:0007669"/>
    <property type="project" value="UniProtKB-UniRule"/>
</dbReference>
<dbReference type="CDD" id="cd00427">
    <property type="entry name" value="Ribosomal_L29_HIP"/>
    <property type="match status" value="1"/>
</dbReference>
<dbReference type="Gene3D" id="6.10.140.1970">
    <property type="match status" value="1"/>
</dbReference>
<dbReference type="HAMAP" id="MF_00374">
    <property type="entry name" value="Ribosomal_uL29"/>
    <property type="match status" value="1"/>
</dbReference>
<dbReference type="InterPro" id="IPR050063">
    <property type="entry name" value="Ribosomal_protein_uL29"/>
</dbReference>
<dbReference type="InterPro" id="IPR001854">
    <property type="entry name" value="Ribosomal_uL29"/>
</dbReference>
<dbReference type="InterPro" id="IPR018254">
    <property type="entry name" value="Ribosomal_uL29_CS"/>
</dbReference>
<dbReference type="InterPro" id="IPR036049">
    <property type="entry name" value="Ribosomal_uL29_sf"/>
</dbReference>
<dbReference type="NCBIfam" id="TIGR00012">
    <property type="entry name" value="L29"/>
    <property type="match status" value="1"/>
</dbReference>
<dbReference type="PANTHER" id="PTHR10916">
    <property type="entry name" value="60S RIBOSOMAL PROTEIN L35/50S RIBOSOMAL PROTEIN L29"/>
    <property type="match status" value="1"/>
</dbReference>
<dbReference type="PANTHER" id="PTHR10916:SF0">
    <property type="entry name" value="LARGE RIBOSOMAL SUBUNIT PROTEIN UL29C"/>
    <property type="match status" value="1"/>
</dbReference>
<dbReference type="Pfam" id="PF00831">
    <property type="entry name" value="Ribosomal_L29"/>
    <property type="match status" value="1"/>
</dbReference>
<dbReference type="SUPFAM" id="SSF46561">
    <property type="entry name" value="Ribosomal protein L29 (L29p)"/>
    <property type="match status" value="1"/>
</dbReference>
<dbReference type="PROSITE" id="PS00579">
    <property type="entry name" value="RIBOSOMAL_L29"/>
    <property type="match status" value="1"/>
</dbReference>
<reference key="1">
    <citation type="journal article" date="2010" name="Genome Biol. Evol.">
        <title>Continuing evolution of Burkholderia mallei through genome reduction and large-scale rearrangements.</title>
        <authorList>
            <person name="Losada L."/>
            <person name="Ronning C.M."/>
            <person name="DeShazer D."/>
            <person name="Woods D."/>
            <person name="Fedorova N."/>
            <person name="Kim H.S."/>
            <person name="Shabalina S.A."/>
            <person name="Pearson T.R."/>
            <person name="Brinkac L."/>
            <person name="Tan P."/>
            <person name="Nandi T."/>
            <person name="Crabtree J."/>
            <person name="Badger J."/>
            <person name="Beckstrom-Sternberg S."/>
            <person name="Saqib M."/>
            <person name="Schutzer S.E."/>
            <person name="Keim P."/>
            <person name="Nierman W.C."/>
        </authorList>
    </citation>
    <scope>NUCLEOTIDE SEQUENCE [LARGE SCALE GENOMIC DNA]</scope>
    <source>
        <strain>SAVP1</strain>
    </source>
</reference>
<name>RL29_BURMS</name>
<protein>
    <recommendedName>
        <fullName evidence="1">Large ribosomal subunit protein uL29</fullName>
    </recommendedName>
    <alternativeName>
        <fullName evidence="2">50S ribosomal protein L29</fullName>
    </alternativeName>
</protein>
<comment type="similarity">
    <text evidence="1">Belongs to the universal ribosomal protein uL29 family.</text>
</comment>
<proteinExistence type="inferred from homology"/>
<gene>
    <name evidence="1" type="primary">rpmC</name>
    <name type="ordered locus">BMASAVP1_A3161</name>
</gene>
<accession>A1V895</accession>
<sequence length="64" mass="7310">MKASELLQKDQAALNKELSDLLKAQFGLRMQLATQQLTNTSQLKKVRRDIARVRTVLTQKANQK</sequence>
<feature type="chain" id="PRO_1000007438" description="Large ribosomal subunit protein uL29">
    <location>
        <begin position="1"/>
        <end position="64"/>
    </location>
</feature>
<organism>
    <name type="scientific">Burkholderia mallei (strain SAVP1)</name>
    <dbReference type="NCBI Taxonomy" id="320388"/>
    <lineage>
        <taxon>Bacteria</taxon>
        <taxon>Pseudomonadati</taxon>
        <taxon>Pseudomonadota</taxon>
        <taxon>Betaproteobacteria</taxon>
        <taxon>Burkholderiales</taxon>
        <taxon>Burkholderiaceae</taxon>
        <taxon>Burkholderia</taxon>
        <taxon>pseudomallei group</taxon>
    </lineage>
</organism>